<gene>
    <name evidence="1" type="primary">cysC</name>
    <name type="ordered locus">BF1675</name>
</gene>
<dbReference type="EC" id="2.7.1.25" evidence="1"/>
<dbReference type="EMBL" id="CR626927">
    <property type="protein sequence ID" value="CAH07375.1"/>
    <property type="molecule type" value="Genomic_DNA"/>
</dbReference>
<dbReference type="RefSeq" id="WP_008659391.1">
    <property type="nucleotide sequence ID" value="NZ_UFTH01000001.1"/>
</dbReference>
<dbReference type="SMR" id="Q5LES5"/>
<dbReference type="PaxDb" id="272559-BF9343_1594"/>
<dbReference type="GeneID" id="60369995"/>
<dbReference type="KEGG" id="bfs:BF9343_1594"/>
<dbReference type="eggNOG" id="COG0529">
    <property type="taxonomic scope" value="Bacteria"/>
</dbReference>
<dbReference type="HOGENOM" id="CLU_046932_1_0_10"/>
<dbReference type="UniPathway" id="UPA00140">
    <property type="reaction ID" value="UER00205"/>
</dbReference>
<dbReference type="Proteomes" id="UP000006731">
    <property type="component" value="Chromosome"/>
</dbReference>
<dbReference type="GO" id="GO:0004020">
    <property type="term" value="F:adenylylsulfate kinase activity"/>
    <property type="evidence" value="ECO:0007669"/>
    <property type="project" value="UniProtKB-UniRule"/>
</dbReference>
<dbReference type="GO" id="GO:0005524">
    <property type="term" value="F:ATP binding"/>
    <property type="evidence" value="ECO:0007669"/>
    <property type="project" value="UniProtKB-UniRule"/>
</dbReference>
<dbReference type="GO" id="GO:0070814">
    <property type="term" value="P:hydrogen sulfide biosynthetic process"/>
    <property type="evidence" value="ECO:0007669"/>
    <property type="project" value="UniProtKB-UniRule"/>
</dbReference>
<dbReference type="GO" id="GO:0000103">
    <property type="term" value="P:sulfate assimilation"/>
    <property type="evidence" value="ECO:0007669"/>
    <property type="project" value="UniProtKB-UniRule"/>
</dbReference>
<dbReference type="CDD" id="cd02027">
    <property type="entry name" value="APSK"/>
    <property type="match status" value="1"/>
</dbReference>
<dbReference type="FunFam" id="3.40.50.300:FF:001219">
    <property type="entry name" value="Adenylyl-sulfate kinase"/>
    <property type="match status" value="1"/>
</dbReference>
<dbReference type="Gene3D" id="3.40.50.300">
    <property type="entry name" value="P-loop containing nucleotide triphosphate hydrolases"/>
    <property type="match status" value="1"/>
</dbReference>
<dbReference type="HAMAP" id="MF_00065">
    <property type="entry name" value="Adenylyl_sulf_kinase"/>
    <property type="match status" value="1"/>
</dbReference>
<dbReference type="InterPro" id="IPR002891">
    <property type="entry name" value="APS_kinase"/>
</dbReference>
<dbReference type="InterPro" id="IPR027417">
    <property type="entry name" value="P-loop_NTPase"/>
</dbReference>
<dbReference type="NCBIfam" id="TIGR00455">
    <property type="entry name" value="apsK"/>
    <property type="match status" value="1"/>
</dbReference>
<dbReference type="NCBIfam" id="NF003013">
    <property type="entry name" value="PRK03846.1"/>
    <property type="match status" value="1"/>
</dbReference>
<dbReference type="PANTHER" id="PTHR11055">
    <property type="entry name" value="BIFUNCTIONAL 3'-PHOSPHOADENOSINE 5'-PHOSPHOSULFATE SYNTHASE"/>
    <property type="match status" value="1"/>
</dbReference>
<dbReference type="PANTHER" id="PTHR11055:SF1">
    <property type="entry name" value="PAPS SYNTHETASE, ISOFORM D"/>
    <property type="match status" value="1"/>
</dbReference>
<dbReference type="Pfam" id="PF01583">
    <property type="entry name" value="APS_kinase"/>
    <property type="match status" value="1"/>
</dbReference>
<dbReference type="SUPFAM" id="SSF52540">
    <property type="entry name" value="P-loop containing nucleoside triphosphate hydrolases"/>
    <property type="match status" value="1"/>
</dbReference>
<protein>
    <recommendedName>
        <fullName evidence="1">Adenylyl-sulfate kinase</fullName>
        <ecNumber evidence="1">2.7.1.25</ecNumber>
    </recommendedName>
    <alternativeName>
        <fullName evidence="1">APS kinase</fullName>
    </alternativeName>
    <alternativeName>
        <fullName evidence="1">ATP adenosine-5'-phosphosulfate 3'-phosphotransferase</fullName>
    </alternativeName>
    <alternativeName>
        <fullName evidence="1">Adenosine-5'-phosphosulfate kinase</fullName>
    </alternativeName>
</protein>
<feature type="chain" id="PRO_1000202405" description="Adenylyl-sulfate kinase">
    <location>
        <begin position="1"/>
        <end position="202"/>
    </location>
</feature>
<feature type="active site" description="Phosphoserine intermediate" evidence="1">
    <location>
        <position position="109"/>
    </location>
</feature>
<feature type="binding site" evidence="1">
    <location>
        <begin position="35"/>
        <end position="42"/>
    </location>
    <ligand>
        <name>ATP</name>
        <dbReference type="ChEBI" id="CHEBI:30616"/>
    </ligand>
</feature>
<name>CYSC_BACFN</name>
<evidence type="ECO:0000255" key="1">
    <source>
        <dbReference type="HAMAP-Rule" id="MF_00065"/>
    </source>
</evidence>
<comment type="function">
    <text evidence="1">Catalyzes the synthesis of activated sulfate.</text>
</comment>
<comment type="catalytic activity">
    <reaction evidence="1">
        <text>adenosine 5'-phosphosulfate + ATP = 3'-phosphoadenylyl sulfate + ADP + H(+)</text>
        <dbReference type="Rhea" id="RHEA:24152"/>
        <dbReference type="ChEBI" id="CHEBI:15378"/>
        <dbReference type="ChEBI" id="CHEBI:30616"/>
        <dbReference type="ChEBI" id="CHEBI:58243"/>
        <dbReference type="ChEBI" id="CHEBI:58339"/>
        <dbReference type="ChEBI" id="CHEBI:456216"/>
        <dbReference type="EC" id="2.7.1.25"/>
    </reaction>
</comment>
<comment type="pathway">
    <text evidence="1">Sulfur metabolism; hydrogen sulfide biosynthesis; sulfite from sulfate: step 2/3.</text>
</comment>
<comment type="similarity">
    <text evidence="1">Belongs to the APS kinase family.</text>
</comment>
<sequence length="202" mass="22766">MEENNNIYPIFDRMLTRQDKEELLKQRGVMIWFTGLSGSGKSTIAIALERELHKRGLLCRILDGDNIRTGINNNLGFSETDRVENIRRIAEVSKLFIDTGIITIAAFISPNNDIREMAARIVGPDDFLEIFVSTPLAECEKRDVKGLYAKARRGEIKNFTGISAPFEAPEHPALSLDTSVLSLEESVNRLLEIVLPRVSRHE</sequence>
<organism>
    <name type="scientific">Bacteroides fragilis (strain ATCC 25285 / DSM 2151 / CCUG 4856 / JCM 11019 / LMG 10263 / NCTC 9343 / Onslow / VPI 2553 / EN-2)</name>
    <dbReference type="NCBI Taxonomy" id="272559"/>
    <lineage>
        <taxon>Bacteria</taxon>
        <taxon>Pseudomonadati</taxon>
        <taxon>Bacteroidota</taxon>
        <taxon>Bacteroidia</taxon>
        <taxon>Bacteroidales</taxon>
        <taxon>Bacteroidaceae</taxon>
        <taxon>Bacteroides</taxon>
    </lineage>
</organism>
<keyword id="KW-0067">ATP-binding</keyword>
<keyword id="KW-0418">Kinase</keyword>
<keyword id="KW-0547">Nucleotide-binding</keyword>
<keyword id="KW-0597">Phosphoprotein</keyword>
<keyword id="KW-0808">Transferase</keyword>
<proteinExistence type="inferred from homology"/>
<reference key="1">
    <citation type="journal article" date="2005" name="Science">
        <title>Extensive DNA inversions in the B. fragilis genome control variable gene expression.</title>
        <authorList>
            <person name="Cerdeno-Tarraga A.-M."/>
            <person name="Patrick S."/>
            <person name="Crossman L.C."/>
            <person name="Blakely G."/>
            <person name="Abratt V."/>
            <person name="Lennard N."/>
            <person name="Poxton I."/>
            <person name="Duerden B."/>
            <person name="Harris B."/>
            <person name="Quail M.A."/>
            <person name="Barron A."/>
            <person name="Clark L."/>
            <person name="Corton C."/>
            <person name="Doggett J."/>
            <person name="Holden M.T.G."/>
            <person name="Larke N."/>
            <person name="Line A."/>
            <person name="Lord A."/>
            <person name="Norbertczak H."/>
            <person name="Ormond D."/>
            <person name="Price C."/>
            <person name="Rabbinowitsch E."/>
            <person name="Woodward J."/>
            <person name="Barrell B.G."/>
            <person name="Parkhill J."/>
        </authorList>
    </citation>
    <scope>NUCLEOTIDE SEQUENCE [LARGE SCALE GENOMIC DNA]</scope>
    <source>
        <strain>ATCC 25285 / DSM 2151 / CCUG 4856 / JCM 11019 / LMG 10263 / NCTC 9343 / Onslow / VPI 2553 / EN-2</strain>
    </source>
</reference>
<accession>Q5LES5</accession>